<dbReference type="EC" id="2.7.2.8" evidence="1"/>
<dbReference type="EMBL" id="AE008692">
    <property type="protein sequence ID" value="AAV90118.1"/>
    <property type="molecule type" value="Genomic_DNA"/>
</dbReference>
<dbReference type="RefSeq" id="WP_011241267.1">
    <property type="nucleotide sequence ID" value="NZ_CP035711.1"/>
</dbReference>
<dbReference type="SMR" id="Q5NME2"/>
<dbReference type="STRING" id="264203.ZMO1494"/>
<dbReference type="KEGG" id="zmo:ZMO1494"/>
<dbReference type="eggNOG" id="COG0548">
    <property type="taxonomic scope" value="Bacteria"/>
</dbReference>
<dbReference type="HOGENOM" id="CLU_053680_0_0_5"/>
<dbReference type="UniPathway" id="UPA00068">
    <property type="reaction ID" value="UER00107"/>
</dbReference>
<dbReference type="Proteomes" id="UP000001173">
    <property type="component" value="Chromosome"/>
</dbReference>
<dbReference type="GO" id="GO:0005737">
    <property type="term" value="C:cytoplasm"/>
    <property type="evidence" value="ECO:0007669"/>
    <property type="project" value="UniProtKB-SubCell"/>
</dbReference>
<dbReference type="GO" id="GO:0003991">
    <property type="term" value="F:acetylglutamate kinase activity"/>
    <property type="evidence" value="ECO:0007669"/>
    <property type="project" value="UniProtKB-UniRule"/>
</dbReference>
<dbReference type="GO" id="GO:0005524">
    <property type="term" value="F:ATP binding"/>
    <property type="evidence" value="ECO:0007669"/>
    <property type="project" value="UniProtKB-UniRule"/>
</dbReference>
<dbReference type="GO" id="GO:0042450">
    <property type="term" value="P:arginine biosynthetic process via ornithine"/>
    <property type="evidence" value="ECO:0007669"/>
    <property type="project" value="UniProtKB-UniRule"/>
</dbReference>
<dbReference type="GO" id="GO:0006526">
    <property type="term" value="P:L-arginine biosynthetic process"/>
    <property type="evidence" value="ECO:0007669"/>
    <property type="project" value="UniProtKB-UniPathway"/>
</dbReference>
<dbReference type="CDD" id="cd04250">
    <property type="entry name" value="AAK_NAGK-C"/>
    <property type="match status" value="1"/>
</dbReference>
<dbReference type="FunFam" id="3.40.1160.10:FF:000004">
    <property type="entry name" value="Acetylglutamate kinase"/>
    <property type="match status" value="1"/>
</dbReference>
<dbReference type="Gene3D" id="3.40.1160.10">
    <property type="entry name" value="Acetylglutamate kinase-like"/>
    <property type="match status" value="1"/>
</dbReference>
<dbReference type="HAMAP" id="MF_00082">
    <property type="entry name" value="ArgB"/>
    <property type="match status" value="1"/>
</dbReference>
<dbReference type="InterPro" id="IPR036393">
    <property type="entry name" value="AceGlu_kinase-like_sf"/>
</dbReference>
<dbReference type="InterPro" id="IPR004662">
    <property type="entry name" value="AcgluKinase_fam"/>
</dbReference>
<dbReference type="InterPro" id="IPR037528">
    <property type="entry name" value="ArgB"/>
</dbReference>
<dbReference type="InterPro" id="IPR001048">
    <property type="entry name" value="Asp/Glu/Uridylate_kinase"/>
</dbReference>
<dbReference type="InterPro" id="IPR001057">
    <property type="entry name" value="Glu/AcGlu_kinase"/>
</dbReference>
<dbReference type="InterPro" id="IPR041727">
    <property type="entry name" value="NAGK-C"/>
</dbReference>
<dbReference type="NCBIfam" id="TIGR00761">
    <property type="entry name" value="argB"/>
    <property type="match status" value="1"/>
</dbReference>
<dbReference type="PANTHER" id="PTHR23342">
    <property type="entry name" value="N-ACETYLGLUTAMATE SYNTHASE"/>
    <property type="match status" value="1"/>
</dbReference>
<dbReference type="PANTHER" id="PTHR23342:SF0">
    <property type="entry name" value="N-ACETYLGLUTAMATE SYNTHASE, MITOCHONDRIAL"/>
    <property type="match status" value="1"/>
</dbReference>
<dbReference type="Pfam" id="PF00696">
    <property type="entry name" value="AA_kinase"/>
    <property type="match status" value="1"/>
</dbReference>
<dbReference type="PIRSF" id="PIRSF000728">
    <property type="entry name" value="NAGK"/>
    <property type="match status" value="1"/>
</dbReference>
<dbReference type="PRINTS" id="PR00474">
    <property type="entry name" value="GLU5KINASE"/>
</dbReference>
<dbReference type="SUPFAM" id="SSF53633">
    <property type="entry name" value="Carbamate kinase-like"/>
    <property type="match status" value="1"/>
</dbReference>
<name>ARGB_ZYMMO</name>
<comment type="function">
    <text evidence="1">Catalyzes the ATP-dependent phosphorylation of N-acetyl-L-glutamate.</text>
</comment>
<comment type="catalytic activity">
    <reaction evidence="1">
        <text>N-acetyl-L-glutamate + ATP = N-acetyl-L-glutamyl 5-phosphate + ADP</text>
        <dbReference type="Rhea" id="RHEA:14629"/>
        <dbReference type="ChEBI" id="CHEBI:30616"/>
        <dbReference type="ChEBI" id="CHEBI:44337"/>
        <dbReference type="ChEBI" id="CHEBI:57936"/>
        <dbReference type="ChEBI" id="CHEBI:456216"/>
        <dbReference type="EC" id="2.7.2.8"/>
    </reaction>
</comment>
<comment type="pathway">
    <text evidence="1">Amino-acid biosynthesis; L-arginine biosynthesis; N(2)-acetyl-L-ornithine from L-glutamate: step 2/4.</text>
</comment>
<comment type="subcellular location">
    <subcellularLocation>
        <location evidence="1">Cytoplasm</location>
    </subcellularLocation>
</comment>
<comment type="similarity">
    <text evidence="1">Belongs to the acetylglutamate kinase family. ArgB subfamily.</text>
</comment>
<proteinExistence type="inferred from homology"/>
<gene>
    <name evidence="1" type="primary">argB</name>
    <name type="ordered locus">ZMO1494</name>
</gene>
<keyword id="KW-0028">Amino-acid biosynthesis</keyword>
<keyword id="KW-0055">Arginine biosynthesis</keyword>
<keyword id="KW-0067">ATP-binding</keyword>
<keyword id="KW-0963">Cytoplasm</keyword>
<keyword id="KW-0418">Kinase</keyword>
<keyword id="KW-0547">Nucleotide-binding</keyword>
<keyword id="KW-1185">Reference proteome</keyword>
<keyword id="KW-0808">Transferase</keyword>
<sequence>MSATYAPDRILLEKAETLSEALPYIQRYAGKIFVVKYGGHAMGNPDAAQDFAEDIVLLKAIGIHPVVVHGGGPQIGKMLKALGVESQFIDGLRVTDNETAKIAEMVLSGAINKDIVSWIGRAGGRAVGISGKDAKLVEVEKVKKIRKNSTDGQDENIDLGFVGRPVSVDRRLIDTLTQSGMIPVVAPIGVGADGETYNINADTMAGALAAGLEAARLFLLTDVAGVLDADKKLLRTLTPSQIDSLTKADVISGGMIPKLETCIESVKSGVDAAVILDGRVPHSILIELFTEQGAGTLVKLD</sequence>
<reference key="1">
    <citation type="journal article" date="2005" name="Nat. Biotechnol.">
        <title>The genome sequence of the ethanologenic bacterium Zymomonas mobilis ZM4.</title>
        <authorList>
            <person name="Seo J.-S."/>
            <person name="Chong H."/>
            <person name="Park H.S."/>
            <person name="Yoon K.-O."/>
            <person name="Jung C."/>
            <person name="Kim J.J."/>
            <person name="Hong J.H."/>
            <person name="Kim H."/>
            <person name="Kim J.-H."/>
            <person name="Kil J.-I."/>
            <person name="Park C.J."/>
            <person name="Oh H.-M."/>
            <person name="Lee J.-S."/>
            <person name="Jin S.-J."/>
            <person name="Um H.-W."/>
            <person name="Lee H.-J."/>
            <person name="Oh S.-J."/>
            <person name="Kim J.Y."/>
            <person name="Kang H.L."/>
            <person name="Lee S.Y."/>
            <person name="Lee K.J."/>
            <person name="Kang H.S."/>
        </authorList>
    </citation>
    <scope>NUCLEOTIDE SEQUENCE [LARGE SCALE GENOMIC DNA]</scope>
    <source>
        <strain>ATCC 31821 / ZM4 / CP4</strain>
    </source>
</reference>
<feature type="chain" id="PRO_0000264787" description="Acetylglutamate kinase">
    <location>
        <begin position="1"/>
        <end position="301"/>
    </location>
</feature>
<feature type="binding site" evidence="1">
    <location>
        <begin position="71"/>
        <end position="72"/>
    </location>
    <ligand>
        <name>substrate</name>
    </ligand>
</feature>
<feature type="binding site" evidence="1">
    <location>
        <position position="93"/>
    </location>
    <ligand>
        <name>substrate</name>
    </ligand>
</feature>
<feature type="binding site" evidence="1">
    <location>
        <position position="198"/>
    </location>
    <ligand>
        <name>substrate</name>
    </ligand>
</feature>
<feature type="site" description="Transition state stabilizer" evidence="1">
    <location>
        <position position="36"/>
    </location>
</feature>
<feature type="site" description="Transition state stabilizer" evidence="1">
    <location>
        <position position="258"/>
    </location>
</feature>
<evidence type="ECO:0000255" key="1">
    <source>
        <dbReference type="HAMAP-Rule" id="MF_00082"/>
    </source>
</evidence>
<organism>
    <name type="scientific">Zymomonas mobilis subsp. mobilis (strain ATCC 31821 / ZM4 / CP4)</name>
    <dbReference type="NCBI Taxonomy" id="264203"/>
    <lineage>
        <taxon>Bacteria</taxon>
        <taxon>Pseudomonadati</taxon>
        <taxon>Pseudomonadota</taxon>
        <taxon>Alphaproteobacteria</taxon>
        <taxon>Sphingomonadales</taxon>
        <taxon>Zymomonadaceae</taxon>
        <taxon>Zymomonas</taxon>
    </lineage>
</organism>
<accession>Q5NME2</accession>
<protein>
    <recommendedName>
        <fullName evidence="1">Acetylglutamate kinase</fullName>
        <ecNumber evidence="1">2.7.2.8</ecNumber>
    </recommendedName>
    <alternativeName>
        <fullName evidence="1">N-acetyl-L-glutamate 5-phosphotransferase</fullName>
    </alternativeName>
    <alternativeName>
        <fullName evidence="1">NAG kinase</fullName>
        <shortName evidence="1">NAGK</shortName>
    </alternativeName>
</protein>